<geneLocation type="chloroplast"/>
<organism>
    <name type="scientific">Carica papaya</name>
    <name type="common">Papaya</name>
    <dbReference type="NCBI Taxonomy" id="3649"/>
    <lineage>
        <taxon>Eukaryota</taxon>
        <taxon>Viridiplantae</taxon>
        <taxon>Streptophyta</taxon>
        <taxon>Embryophyta</taxon>
        <taxon>Tracheophyta</taxon>
        <taxon>Spermatophyta</taxon>
        <taxon>Magnoliopsida</taxon>
        <taxon>eudicotyledons</taxon>
        <taxon>Gunneridae</taxon>
        <taxon>Pentapetalae</taxon>
        <taxon>rosids</taxon>
        <taxon>malvids</taxon>
        <taxon>Brassicales</taxon>
        <taxon>Caricaceae</taxon>
        <taxon>Carica</taxon>
    </lineage>
</organism>
<protein>
    <recommendedName>
        <fullName evidence="1">DNA-directed RNA polymerase subunit beta''</fullName>
        <ecNumber evidence="1">2.7.7.6</ecNumber>
    </recommendedName>
    <alternativeName>
        <fullName evidence="1">PEP</fullName>
    </alternativeName>
    <alternativeName>
        <fullName evidence="1">Plastid-encoded RNA polymerase subunit beta''</fullName>
        <shortName evidence="1">RNA polymerase subunit beta''</shortName>
    </alternativeName>
</protein>
<feature type="chain" id="PRO_0000353550" description="DNA-directed RNA polymerase subunit beta''">
    <location>
        <begin position="1"/>
        <end position="1387"/>
    </location>
</feature>
<feature type="binding site" evidence="1">
    <location>
        <position position="220"/>
    </location>
    <ligand>
        <name>Zn(2+)</name>
        <dbReference type="ChEBI" id="CHEBI:29105"/>
    </ligand>
</feature>
<feature type="binding site" evidence="1">
    <location>
        <position position="291"/>
    </location>
    <ligand>
        <name>Zn(2+)</name>
        <dbReference type="ChEBI" id="CHEBI:29105"/>
    </ligand>
</feature>
<feature type="binding site" evidence="1">
    <location>
        <position position="298"/>
    </location>
    <ligand>
        <name>Zn(2+)</name>
        <dbReference type="ChEBI" id="CHEBI:29105"/>
    </ligand>
</feature>
<feature type="binding site" evidence="1">
    <location>
        <position position="301"/>
    </location>
    <ligand>
        <name>Zn(2+)</name>
        <dbReference type="ChEBI" id="CHEBI:29105"/>
    </ligand>
</feature>
<name>RPOC2_CARPA</name>
<accession>B1A925</accession>
<evidence type="ECO:0000255" key="1">
    <source>
        <dbReference type="HAMAP-Rule" id="MF_01324"/>
    </source>
</evidence>
<sequence>MAERANLVFHNKVIDGTAIKRLISRLIDRFGMAYTSHILDQVKTLGFQQATATSISLGIDDLLTIPSKGWLVQDAEQQSLILEKHHHYGNVHAVEKLRQSIEIWYATSEYLRQEMNPNFRVTDPFNPVHIMSFSGARGNASQVHQLVGMRGLMSDPQGQMIDLPIQSNLREGLSLTEYIISCYGARKGVVDTAVRTSDAGYLTRRLVEVVQHIVVRRTDCGTIRGISVSPKNRTMPERIFIQTLIGRVLADDIYMGPRCIAIRNQDIGIGLVNRFITFRTQSISIRTPFTCRSTSWICRLCYGRSPTHGDLVELGEAVGIIAGQSIGEPGTQLTLRTFHTGGVFTGGTAEHVRSPSNGKIKFNEDLVHPTRTRHGHPAFLCYIDLSVVIESEDIIHNVTIPPKSFLLVQNDQYVESEQVIAEIRAGTYTLNYKERVRKHIYSNSEGEMHWSTDVYHAPEFTYSNVHLLPKTSHLWILSGGSSRSSLVPFSLHKDQDQMNIHSLSVEQESISSLAVNNDQGRHKFFSSNFSDKKKCGIPDYSEFHRILDTGHCNLIYFASLHENSDLLAKRRRNRFIIPFQSIQEQEKELMPRSGISIEIPINGIFRRNSILAFFDDPRYRRKSSGILKYGTIGAHSIVKKEDVIEYRGVKKFKTKYQMKVDRFFFIPEEVHILPESSSIMVRNNSIIGVDTRITLNIRSQVGGLVRVERKKKSIELQIFSGDIHFPGKTDKISRHSGILIPPGRGKTNSKESKKLKNWIYVQRITPTKKKYFVLVRPVATYEIADGINLATLFPQDLFREKDNMQLRVVNYILYGNGKPVRGIFDTSIQLVRTCLVLNWDQDNKSSSVEEVRTFFVEVSTNSLIRDFLRIDLVKSQSHISYIRKRNDPSGSGLISDNGSDRINPFYYKERIQQSLSKNHGTIRTLLNRNKECQSLIILSSSNCFQMGPFNHVKYHNVIKQSIKKDPLIPIRNSLGPVGTAIQIANFYSIYHLITHNQISVTKYFQLDNLNQIFEVIKYYLMDETGRVYNPDPCSNIILNPFNLNWYFLYQNYHHNYCEETSTIISLGQFICENVCLAKNGPHLKSGQVLIVQVDSVVIRSAKPYLATPGATVHGHYGEILYEGDTLVTFIYEKSRSGDITQGLPKVEQVLEVRSIDSISLNLEKRVEGWNKRITRILGIPWGFLIGAELTIVQSRISLVNKIQKVYRSQGVQIHNRHIEIIVRQITSKVLVSEEGMSNVFLPGELIGLLRAERTGRALEEAICYRAILLGITRASLNTQSFISEASFQETARVLAKAALRGRIDWLKGLKENVVLGGMIPAGTGFKGLVHCSRQHTSILLETKKKNLYLFEGEMRDIFFHHRELFDSCISKNLHNTSERSFIGLNDS</sequence>
<proteinExistence type="inferred from homology"/>
<gene>
    <name evidence="1" type="primary">rpoC2</name>
</gene>
<reference key="1">
    <citation type="journal article" date="2008" name="Nature">
        <title>The draft genome of the transgenic tropical fruit tree papaya (Carica papaya Linnaeus).</title>
        <authorList>
            <person name="Ming R."/>
            <person name="Hou S."/>
            <person name="Feng Y."/>
            <person name="Yu Q."/>
            <person name="Dionne-Laporte A."/>
            <person name="Saw J.H."/>
            <person name="Senin P."/>
            <person name="Wang W."/>
            <person name="Ly B.V."/>
            <person name="Lewis K.L."/>
            <person name="Salzberg S.L."/>
            <person name="Feng L."/>
            <person name="Jones M.R."/>
            <person name="Skelton R.L."/>
            <person name="Murray J.E."/>
            <person name="Chen C."/>
            <person name="Qian W."/>
            <person name="Shen J."/>
            <person name="Du P."/>
            <person name="Eustice M."/>
            <person name="Tong E."/>
            <person name="Tang H."/>
            <person name="Lyons E."/>
            <person name="Paull R.E."/>
            <person name="Michael T.P."/>
            <person name="Wall K."/>
            <person name="Rice D.W."/>
            <person name="Albert H."/>
            <person name="Wang M.L."/>
            <person name="Zhu Y.J."/>
            <person name="Schatz M."/>
            <person name="Nagarajan N."/>
            <person name="Acob R.A."/>
            <person name="Guan P."/>
            <person name="Blas A."/>
            <person name="Wai C.M."/>
            <person name="Ackerman C.M."/>
            <person name="Ren Y."/>
            <person name="Liu C."/>
            <person name="Wang J."/>
            <person name="Wang J."/>
            <person name="Na J.K."/>
            <person name="Shakirov E.V."/>
            <person name="Haas B."/>
            <person name="Thimmapuram J."/>
            <person name="Nelson D."/>
            <person name="Wang X."/>
            <person name="Bowers J.E."/>
            <person name="Gschwend A.R."/>
            <person name="Delcher A.L."/>
            <person name="Singh R."/>
            <person name="Suzuki J.Y."/>
            <person name="Tripathi S."/>
            <person name="Neupane K."/>
            <person name="Wei H."/>
            <person name="Irikura B."/>
            <person name="Paidi M."/>
            <person name="Jiang N."/>
            <person name="Zhang W."/>
            <person name="Presting G."/>
            <person name="Windsor A."/>
            <person name="Navajas-Perez R."/>
            <person name="Torres M.J."/>
            <person name="Feltus F.A."/>
            <person name="Porter B."/>
            <person name="Li Y."/>
            <person name="Burroughs A.M."/>
            <person name="Luo M.C."/>
            <person name="Liu L."/>
            <person name="Christopher D.A."/>
            <person name="Mount S.M."/>
            <person name="Moore P.H."/>
            <person name="Sugimura T."/>
            <person name="Jiang J."/>
            <person name="Schuler M.A."/>
            <person name="Friedman V."/>
            <person name="Mitchell-Olds T."/>
            <person name="Shippen D.E."/>
            <person name="dePamphilis C.W."/>
            <person name="Palmer J.D."/>
            <person name="Freeling M."/>
            <person name="Paterson A.H."/>
            <person name="Gonsalves D."/>
            <person name="Wang L."/>
            <person name="Alam M."/>
        </authorList>
    </citation>
    <scope>NUCLEOTIDE SEQUENCE [LARGE SCALE GENOMIC DNA]</scope>
    <source>
        <strain>cv. SunUp</strain>
    </source>
</reference>
<keyword id="KW-0150">Chloroplast</keyword>
<keyword id="KW-0240">DNA-directed RNA polymerase</keyword>
<keyword id="KW-0479">Metal-binding</keyword>
<keyword id="KW-0548">Nucleotidyltransferase</keyword>
<keyword id="KW-0934">Plastid</keyword>
<keyword id="KW-0804">Transcription</keyword>
<keyword id="KW-0808">Transferase</keyword>
<keyword id="KW-0862">Zinc</keyword>
<comment type="function">
    <text evidence="1">DNA-dependent RNA polymerase catalyzes the transcription of DNA into RNA using the four ribonucleoside triphosphates as substrates.</text>
</comment>
<comment type="catalytic activity">
    <reaction evidence="1">
        <text>RNA(n) + a ribonucleoside 5'-triphosphate = RNA(n+1) + diphosphate</text>
        <dbReference type="Rhea" id="RHEA:21248"/>
        <dbReference type="Rhea" id="RHEA-COMP:14527"/>
        <dbReference type="Rhea" id="RHEA-COMP:17342"/>
        <dbReference type="ChEBI" id="CHEBI:33019"/>
        <dbReference type="ChEBI" id="CHEBI:61557"/>
        <dbReference type="ChEBI" id="CHEBI:140395"/>
        <dbReference type="EC" id="2.7.7.6"/>
    </reaction>
</comment>
<comment type="cofactor">
    <cofactor evidence="1">
        <name>Zn(2+)</name>
        <dbReference type="ChEBI" id="CHEBI:29105"/>
    </cofactor>
    <text evidence="1">Binds 1 Zn(2+) ion per subunit.</text>
</comment>
<comment type="subunit">
    <text evidence="1">In plastids the minimal PEP RNA polymerase catalytic core is composed of four subunits: alpha, beta, beta', and beta''. When a (nuclear-encoded) sigma factor is associated with the core the holoenzyme is formed, which can initiate transcription.</text>
</comment>
<comment type="subcellular location">
    <subcellularLocation>
        <location evidence="1">Plastid</location>
        <location evidence="1">Chloroplast</location>
    </subcellularLocation>
</comment>
<comment type="similarity">
    <text evidence="1">Belongs to the RNA polymerase beta' chain family. RpoC2 subfamily.</text>
</comment>
<dbReference type="EC" id="2.7.7.6" evidence="1"/>
<dbReference type="EMBL" id="EU431223">
    <property type="protein sequence ID" value="ABY86772.1"/>
    <property type="molecule type" value="Genomic_DNA"/>
</dbReference>
<dbReference type="RefSeq" id="YP_001671673.1">
    <property type="nucleotide sequence ID" value="NC_010323.1"/>
</dbReference>
<dbReference type="SMR" id="B1A925"/>
<dbReference type="GeneID" id="5878449"/>
<dbReference type="KEGG" id="cpap:5878449"/>
<dbReference type="OrthoDB" id="1846228at2759"/>
<dbReference type="GO" id="GO:0009507">
    <property type="term" value="C:chloroplast"/>
    <property type="evidence" value="ECO:0007669"/>
    <property type="project" value="UniProtKB-SubCell"/>
</dbReference>
<dbReference type="GO" id="GO:0000428">
    <property type="term" value="C:DNA-directed RNA polymerase complex"/>
    <property type="evidence" value="ECO:0007669"/>
    <property type="project" value="UniProtKB-KW"/>
</dbReference>
<dbReference type="GO" id="GO:0005739">
    <property type="term" value="C:mitochondrion"/>
    <property type="evidence" value="ECO:0007669"/>
    <property type="project" value="GOC"/>
</dbReference>
<dbReference type="GO" id="GO:0003677">
    <property type="term" value="F:DNA binding"/>
    <property type="evidence" value="ECO:0007669"/>
    <property type="project" value="UniProtKB-UniRule"/>
</dbReference>
<dbReference type="GO" id="GO:0003899">
    <property type="term" value="F:DNA-directed RNA polymerase activity"/>
    <property type="evidence" value="ECO:0007669"/>
    <property type="project" value="UniProtKB-UniRule"/>
</dbReference>
<dbReference type="GO" id="GO:0008270">
    <property type="term" value="F:zinc ion binding"/>
    <property type="evidence" value="ECO:0007669"/>
    <property type="project" value="UniProtKB-UniRule"/>
</dbReference>
<dbReference type="GO" id="GO:0006351">
    <property type="term" value="P:DNA-templated transcription"/>
    <property type="evidence" value="ECO:0007669"/>
    <property type="project" value="UniProtKB-UniRule"/>
</dbReference>
<dbReference type="CDD" id="cd02655">
    <property type="entry name" value="RNAP_beta'_C"/>
    <property type="match status" value="1"/>
</dbReference>
<dbReference type="FunFam" id="1.10.132.30:FF:000002">
    <property type="entry name" value="DNA-directed RNA polymerase subunit beta"/>
    <property type="match status" value="1"/>
</dbReference>
<dbReference type="FunFam" id="1.10.1790.20:FF:000002">
    <property type="entry name" value="DNA-directed RNA polymerase subunit beta"/>
    <property type="match status" value="1"/>
</dbReference>
<dbReference type="Gene3D" id="1.10.132.30">
    <property type="match status" value="1"/>
</dbReference>
<dbReference type="Gene3D" id="1.10.150.390">
    <property type="match status" value="1"/>
</dbReference>
<dbReference type="Gene3D" id="1.10.1790.20">
    <property type="match status" value="1"/>
</dbReference>
<dbReference type="Gene3D" id="1.10.274.100">
    <property type="entry name" value="RNA polymerase Rpb1, domain 3"/>
    <property type="match status" value="1"/>
</dbReference>
<dbReference type="HAMAP" id="MF_01324">
    <property type="entry name" value="RNApol_bact_RpoC2"/>
    <property type="match status" value="1"/>
</dbReference>
<dbReference type="InterPro" id="IPR012756">
    <property type="entry name" value="DNA-dir_RpoC2_beta_pp"/>
</dbReference>
<dbReference type="InterPro" id="IPR050254">
    <property type="entry name" value="RNA_pol_beta''_euk"/>
</dbReference>
<dbReference type="InterPro" id="IPR042102">
    <property type="entry name" value="RNA_pol_Rpb1_3_sf"/>
</dbReference>
<dbReference type="InterPro" id="IPR007083">
    <property type="entry name" value="RNA_pol_Rpb1_4"/>
</dbReference>
<dbReference type="InterPro" id="IPR007081">
    <property type="entry name" value="RNA_pol_Rpb1_5"/>
</dbReference>
<dbReference type="InterPro" id="IPR038120">
    <property type="entry name" value="Rpb1_funnel_sf"/>
</dbReference>
<dbReference type="NCBIfam" id="TIGR02388">
    <property type="entry name" value="rpoC2_cyan"/>
    <property type="match status" value="1"/>
</dbReference>
<dbReference type="PANTHER" id="PTHR34995">
    <property type="entry name" value="DNA-DIRECTED RNA POLYMERASE SUBUNIT BETA"/>
    <property type="match status" value="1"/>
</dbReference>
<dbReference type="PANTHER" id="PTHR34995:SF1">
    <property type="entry name" value="DNA-DIRECTED RNA POLYMERASE SUBUNIT BETA"/>
    <property type="match status" value="1"/>
</dbReference>
<dbReference type="Pfam" id="PF05000">
    <property type="entry name" value="RNA_pol_Rpb1_4"/>
    <property type="match status" value="1"/>
</dbReference>
<dbReference type="Pfam" id="PF04998">
    <property type="entry name" value="RNA_pol_Rpb1_5"/>
    <property type="match status" value="2"/>
</dbReference>
<dbReference type="SUPFAM" id="SSF64484">
    <property type="entry name" value="beta and beta-prime subunits of DNA dependent RNA-polymerase"/>
    <property type="match status" value="1"/>
</dbReference>